<protein>
    <recommendedName>
        <fullName evidence="1">ATP-dependent Clp protease adapter protein ClpS</fullName>
    </recommendedName>
</protein>
<name>CLPS_ACIAD</name>
<sequence length="107" mass="11919">MGDSQSDEPEGDIAVQTAPPELKRPPLYAVVLLNDDYTPMDFVIEILQQYFALNLDQATQVMLTVHYEGKGVAGVYPRDIAETKANQVNNYARSQGHPLLCQIEPKD</sequence>
<gene>
    <name evidence="1" type="primary">clpS</name>
    <name type="ordered locus">ACIAD1362</name>
</gene>
<organism>
    <name type="scientific">Acinetobacter baylyi (strain ATCC 33305 / BD413 / ADP1)</name>
    <dbReference type="NCBI Taxonomy" id="62977"/>
    <lineage>
        <taxon>Bacteria</taxon>
        <taxon>Pseudomonadati</taxon>
        <taxon>Pseudomonadota</taxon>
        <taxon>Gammaproteobacteria</taxon>
        <taxon>Moraxellales</taxon>
        <taxon>Moraxellaceae</taxon>
        <taxon>Acinetobacter</taxon>
    </lineage>
</organism>
<proteinExistence type="inferred from homology"/>
<feature type="chain" id="PRO_0000215679" description="ATP-dependent Clp protease adapter protein ClpS">
    <location>
        <begin position="1"/>
        <end position="107"/>
    </location>
</feature>
<evidence type="ECO:0000255" key="1">
    <source>
        <dbReference type="HAMAP-Rule" id="MF_00302"/>
    </source>
</evidence>
<evidence type="ECO:0000305" key="2"/>
<reference key="1">
    <citation type="journal article" date="2004" name="Nucleic Acids Res.">
        <title>Unique features revealed by the genome sequence of Acinetobacter sp. ADP1, a versatile and naturally transformation competent bacterium.</title>
        <authorList>
            <person name="Barbe V."/>
            <person name="Vallenet D."/>
            <person name="Fonknechten N."/>
            <person name="Kreimeyer A."/>
            <person name="Oztas S."/>
            <person name="Labarre L."/>
            <person name="Cruveiller S."/>
            <person name="Robert C."/>
            <person name="Duprat S."/>
            <person name="Wincker P."/>
            <person name="Ornston L.N."/>
            <person name="Weissenbach J."/>
            <person name="Marliere P."/>
            <person name="Cohen G.N."/>
            <person name="Medigue C."/>
        </authorList>
    </citation>
    <scope>NUCLEOTIDE SEQUENCE [LARGE SCALE GENOMIC DNA]</scope>
    <source>
        <strain>ATCC 33305 / BD413 / ADP1</strain>
    </source>
</reference>
<comment type="function">
    <text evidence="1">Involved in the modulation of the specificity of the ClpAP-mediated ATP-dependent protein degradation.</text>
</comment>
<comment type="subunit">
    <text evidence="1">Binds to the N-terminal domain of the chaperone ClpA.</text>
</comment>
<comment type="similarity">
    <text evidence="1">Belongs to the ClpS family.</text>
</comment>
<comment type="sequence caution" evidence="2">
    <conflict type="erroneous initiation">
        <sequence resource="EMBL-CDS" id="CAG68229"/>
    </conflict>
</comment>
<dbReference type="EMBL" id="CR543861">
    <property type="protein sequence ID" value="CAG68229.1"/>
    <property type="status" value="ALT_INIT"/>
    <property type="molecule type" value="Genomic_DNA"/>
</dbReference>
<dbReference type="SMR" id="Q6FCI2"/>
<dbReference type="STRING" id="202950.GCA_001485005_01120"/>
<dbReference type="KEGG" id="aci:ACIAD1362"/>
<dbReference type="eggNOG" id="COG2127">
    <property type="taxonomic scope" value="Bacteria"/>
</dbReference>
<dbReference type="HOGENOM" id="CLU_134358_2_1_6"/>
<dbReference type="Proteomes" id="UP000000430">
    <property type="component" value="Chromosome"/>
</dbReference>
<dbReference type="GO" id="GO:0030163">
    <property type="term" value="P:protein catabolic process"/>
    <property type="evidence" value="ECO:0007669"/>
    <property type="project" value="InterPro"/>
</dbReference>
<dbReference type="GO" id="GO:0006508">
    <property type="term" value="P:proteolysis"/>
    <property type="evidence" value="ECO:0007669"/>
    <property type="project" value="UniProtKB-UniRule"/>
</dbReference>
<dbReference type="FunFam" id="3.30.1390.10:FF:000002">
    <property type="entry name" value="ATP-dependent Clp protease adapter protein ClpS"/>
    <property type="match status" value="1"/>
</dbReference>
<dbReference type="Gene3D" id="3.30.1390.10">
    <property type="match status" value="1"/>
</dbReference>
<dbReference type="HAMAP" id="MF_00302">
    <property type="entry name" value="ClpS"/>
    <property type="match status" value="1"/>
</dbReference>
<dbReference type="InterPro" id="IPR022935">
    <property type="entry name" value="ClpS"/>
</dbReference>
<dbReference type="InterPro" id="IPR003769">
    <property type="entry name" value="ClpS_core"/>
</dbReference>
<dbReference type="InterPro" id="IPR014719">
    <property type="entry name" value="Ribosomal_bL12_C/ClpS-like"/>
</dbReference>
<dbReference type="NCBIfam" id="NF000672">
    <property type="entry name" value="PRK00033.1-5"/>
    <property type="match status" value="1"/>
</dbReference>
<dbReference type="PANTHER" id="PTHR33473:SF19">
    <property type="entry name" value="ATP-DEPENDENT CLP PROTEASE ADAPTER PROTEIN CLPS"/>
    <property type="match status" value="1"/>
</dbReference>
<dbReference type="PANTHER" id="PTHR33473">
    <property type="entry name" value="ATP-DEPENDENT CLP PROTEASE ADAPTER PROTEIN CLPS1, CHLOROPLASTIC"/>
    <property type="match status" value="1"/>
</dbReference>
<dbReference type="Pfam" id="PF02617">
    <property type="entry name" value="ClpS"/>
    <property type="match status" value="1"/>
</dbReference>
<dbReference type="SUPFAM" id="SSF54736">
    <property type="entry name" value="ClpS-like"/>
    <property type="match status" value="1"/>
</dbReference>
<accession>Q6FCI2</accession>